<feature type="chain" id="PRO_0000237074" description="Small ribosomal subunit protein uS10">
    <location>
        <begin position="1"/>
        <end position="102"/>
    </location>
</feature>
<keyword id="KW-1185">Reference proteome</keyword>
<keyword id="KW-0687">Ribonucleoprotein</keyword>
<keyword id="KW-0689">Ribosomal protein</keyword>
<dbReference type="EMBL" id="CP000084">
    <property type="protein sequence ID" value="AAZ21921.1"/>
    <property type="molecule type" value="Genomic_DNA"/>
</dbReference>
<dbReference type="RefSeq" id="WP_006996810.1">
    <property type="nucleotide sequence ID" value="NC_007205.1"/>
</dbReference>
<dbReference type="SMR" id="Q4FLL7"/>
<dbReference type="STRING" id="335992.SAR11_1118"/>
<dbReference type="GeneID" id="66295607"/>
<dbReference type="KEGG" id="pub:SAR11_1118"/>
<dbReference type="eggNOG" id="COG0051">
    <property type="taxonomic scope" value="Bacteria"/>
</dbReference>
<dbReference type="HOGENOM" id="CLU_122625_1_3_5"/>
<dbReference type="OrthoDB" id="9804464at2"/>
<dbReference type="Proteomes" id="UP000002528">
    <property type="component" value="Chromosome"/>
</dbReference>
<dbReference type="GO" id="GO:1990904">
    <property type="term" value="C:ribonucleoprotein complex"/>
    <property type="evidence" value="ECO:0007669"/>
    <property type="project" value="UniProtKB-KW"/>
</dbReference>
<dbReference type="GO" id="GO:0005840">
    <property type="term" value="C:ribosome"/>
    <property type="evidence" value="ECO:0007669"/>
    <property type="project" value="UniProtKB-KW"/>
</dbReference>
<dbReference type="GO" id="GO:0003735">
    <property type="term" value="F:structural constituent of ribosome"/>
    <property type="evidence" value="ECO:0007669"/>
    <property type="project" value="InterPro"/>
</dbReference>
<dbReference type="GO" id="GO:0000049">
    <property type="term" value="F:tRNA binding"/>
    <property type="evidence" value="ECO:0007669"/>
    <property type="project" value="UniProtKB-UniRule"/>
</dbReference>
<dbReference type="GO" id="GO:0006412">
    <property type="term" value="P:translation"/>
    <property type="evidence" value="ECO:0007669"/>
    <property type="project" value="UniProtKB-UniRule"/>
</dbReference>
<dbReference type="FunFam" id="3.30.70.600:FF:000001">
    <property type="entry name" value="30S ribosomal protein S10"/>
    <property type="match status" value="1"/>
</dbReference>
<dbReference type="Gene3D" id="3.30.70.600">
    <property type="entry name" value="Ribosomal protein S10 domain"/>
    <property type="match status" value="1"/>
</dbReference>
<dbReference type="HAMAP" id="MF_00508">
    <property type="entry name" value="Ribosomal_uS10"/>
    <property type="match status" value="1"/>
</dbReference>
<dbReference type="InterPro" id="IPR001848">
    <property type="entry name" value="Ribosomal_uS10"/>
</dbReference>
<dbReference type="InterPro" id="IPR018268">
    <property type="entry name" value="Ribosomal_uS10_CS"/>
</dbReference>
<dbReference type="InterPro" id="IPR027486">
    <property type="entry name" value="Ribosomal_uS10_dom"/>
</dbReference>
<dbReference type="InterPro" id="IPR036838">
    <property type="entry name" value="Ribosomal_uS10_dom_sf"/>
</dbReference>
<dbReference type="NCBIfam" id="NF001861">
    <property type="entry name" value="PRK00596.1"/>
    <property type="match status" value="1"/>
</dbReference>
<dbReference type="NCBIfam" id="TIGR01049">
    <property type="entry name" value="rpsJ_bact"/>
    <property type="match status" value="1"/>
</dbReference>
<dbReference type="PANTHER" id="PTHR11700">
    <property type="entry name" value="30S RIBOSOMAL PROTEIN S10 FAMILY MEMBER"/>
    <property type="match status" value="1"/>
</dbReference>
<dbReference type="Pfam" id="PF00338">
    <property type="entry name" value="Ribosomal_S10"/>
    <property type="match status" value="1"/>
</dbReference>
<dbReference type="PRINTS" id="PR00971">
    <property type="entry name" value="RIBOSOMALS10"/>
</dbReference>
<dbReference type="SMART" id="SM01403">
    <property type="entry name" value="Ribosomal_S10"/>
    <property type="match status" value="1"/>
</dbReference>
<dbReference type="SUPFAM" id="SSF54999">
    <property type="entry name" value="Ribosomal protein S10"/>
    <property type="match status" value="1"/>
</dbReference>
<dbReference type="PROSITE" id="PS00361">
    <property type="entry name" value="RIBOSOMAL_S10"/>
    <property type="match status" value="1"/>
</dbReference>
<accession>Q4FLL7</accession>
<proteinExistence type="inferred from homology"/>
<evidence type="ECO:0000255" key="1">
    <source>
        <dbReference type="HAMAP-Rule" id="MF_00508"/>
    </source>
</evidence>
<evidence type="ECO:0000305" key="2"/>
<name>RS10_PELUB</name>
<sequence>MEKQNIRIKLRAYDNKILDASTEEIVNTVKRTGATIKGPIPLPTRIERYTVLKGPHIDKKSREQFETRTHKRLIDIIEPTPQTVEALMKLDLASGVDVEIKI</sequence>
<comment type="function">
    <text evidence="1">Involved in the binding of tRNA to the ribosomes.</text>
</comment>
<comment type="subunit">
    <text evidence="1">Part of the 30S ribosomal subunit.</text>
</comment>
<comment type="similarity">
    <text evidence="1">Belongs to the universal ribosomal protein uS10 family.</text>
</comment>
<organism>
    <name type="scientific">Pelagibacter ubique (strain HTCC1062)</name>
    <dbReference type="NCBI Taxonomy" id="335992"/>
    <lineage>
        <taxon>Bacteria</taxon>
        <taxon>Pseudomonadati</taxon>
        <taxon>Pseudomonadota</taxon>
        <taxon>Alphaproteobacteria</taxon>
        <taxon>Candidatus Pelagibacterales</taxon>
        <taxon>Candidatus Pelagibacteraceae</taxon>
        <taxon>Candidatus Pelagibacter</taxon>
    </lineage>
</organism>
<reference key="1">
    <citation type="journal article" date="2005" name="Science">
        <title>Genome streamlining in a cosmopolitan oceanic bacterium.</title>
        <authorList>
            <person name="Giovannoni S.J."/>
            <person name="Tripp H.J."/>
            <person name="Givan S."/>
            <person name="Podar M."/>
            <person name="Vergin K.L."/>
            <person name="Baptista D."/>
            <person name="Bibbs L."/>
            <person name="Eads J."/>
            <person name="Richardson T.H."/>
            <person name="Noordewier M."/>
            <person name="Rappe M.S."/>
            <person name="Short J.M."/>
            <person name="Carrington J.C."/>
            <person name="Mathur E.J."/>
        </authorList>
    </citation>
    <scope>NUCLEOTIDE SEQUENCE [LARGE SCALE GENOMIC DNA]</scope>
    <source>
        <strain>HTCC1062</strain>
    </source>
</reference>
<gene>
    <name evidence="1" type="primary">rpsJ</name>
    <name type="ordered locus">SAR11_1118</name>
</gene>
<protein>
    <recommendedName>
        <fullName evidence="1">Small ribosomal subunit protein uS10</fullName>
    </recommendedName>
    <alternativeName>
        <fullName evidence="2">30S ribosomal protein S10</fullName>
    </alternativeName>
</protein>